<organism>
    <name type="scientific">Synechococcus elongatus (strain ATCC 33912 / PCC 7942 / FACHB-805)</name>
    <name type="common">Anacystis nidulans R2</name>
    <dbReference type="NCBI Taxonomy" id="1140"/>
    <lineage>
        <taxon>Bacteria</taxon>
        <taxon>Bacillati</taxon>
        <taxon>Cyanobacteriota</taxon>
        <taxon>Cyanophyceae</taxon>
        <taxon>Synechococcales</taxon>
        <taxon>Synechococcaceae</taxon>
        <taxon>Synechococcus</taxon>
    </lineage>
</organism>
<reference key="1">
    <citation type="submission" date="2005-08" db="EMBL/GenBank/DDBJ databases">
        <title>Complete sequence of chromosome 1 of Synechococcus elongatus PCC 7942.</title>
        <authorList>
            <consortium name="US DOE Joint Genome Institute"/>
            <person name="Copeland A."/>
            <person name="Lucas S."/>
            <person name="Lapidus A."/>
            <person name="Barry K."/>
            <person name="Detter J.C."/>
            <person name="Glavina T."/>
            <person name="Hammon N."/>
            <person name="Israni S."/>
            <person name="Pitluck S."/>
            <person name="Schmutz J."/>
            <person name="Larimer F."/>
            <person name="Land M."/>
            <person name="Kyrpides N."/>
            <person name="Lykidis A."/>
            <person name="Golden S."/>
            <person name="Richardson P."/>
        </authorList>
    </citation>
    <scope>NUCLEOTIDE SEQUENCE [LARGE SCALE GENOMIC DNA]</scope>
    <source>
        <strain>ATCC 33912 / PCC 7942 / FACHB-805</strain>
    </source>
</reference>
<feature type="chain" id="PRO_0000381672" description="Biotin synthase">
    <location>
        <begin position="1"/>
        <end position="320"/>
    </location>
</feature>
<feature type="domain" description="Radical SAM core" evidence="2">
    <location>
        <begin position="39"/>
        <end position="267"/>
    </location>
</feature>
<feature type="binding site" evidence="1">
    <location>
        <position position="54"/>
    </location>
    <ligand>
        <name>[4Fe-4S] cluster</name>
        <dbReference type="ChEBI" id="CHEBI:49883"/>
        <note>4Fe-4S-S-AdoMet</note>
    </ligand>
</feature>
<feature type="binding site" evidence="1">
    <location>
        <position position="58"/>
    </location>
    <ligand>
        <name>[4Fe-4S] cluster</name>
        <dbReference type="ChEBI" id="CHEBI:49883"/>
        <note>4Fe-4S-S-AdoMet</note>
    </ligand>
</feature>
<feature type="binding site" evidence="1">
    <location>
        <position position="61"/>
    </location>
    <ligand>
        <name>[4Fe-4S] cluster</name>
        <dbReference type="ChEBI" id="CHEBI:49883"/>
        <note>4Fe-4S-S-AdoMet</note>
    </ligand>
</feature>
<feature type="binding site" evidence="1">
    <location>
        <position position="98"/>
    </location>
    <ligand>
        <name>[2Fe-2S] cluster</name>
        <dbReference type="ChEBI" id="CHEBI:190135"/>
    </ligand>
</feature>
<feature type="binding site" evidence="1">
    <location>
        <position position="130"/>
    </location>
    <ligand>
        <name>[2Fe-2S] cluster</name>
        <dbReference type="ChEBI" id="CHEBI:190135"/>
    </ligand>
</feature>
<feature type="binding site" evidence="1">
    <location>
        <position position="190"/>
    </location>
    <ligand>
        <name>[2Fe-2S] cluster</name>
        <dbReference type="ChEBI" id="CHEBI:190135"/>
    </ligand>
</feature>
<feature type="binding site" evidence="1">
    <location>
        <position position="262"/>
    </location>
    <ligand>
        <name>[2Fe-2S] cluster</name>
        <dbReference type="ChEBI" id="CHEBI:190135"/>
    </ligand>
</feature>
<name>BIOB_SYNE7</name>
<sequence>MEAIRHDWTLEEIEDLLNTPLLELVHRAQTVHRDYQPANAIQLATLLSVKTGGCSENCAYCPQSAHYNTEVDPQSTLPIETVLEQAERAKAAGASRFCMGWAWREIRDGAQFDAMLEMVQGVRQLGLEACVTAGMLSDRQAERLAEAGLTAYNHNLDTSPEFYGEIISTRTYADRLATLERVRQAGISVCCGGIIGMGEGQRDRAGLLQVLATLNPHPESVPINALVPVEGTPLGDRDRLDPLDLVRMCAVARILMPKARVRLSAGRTALSREAQVLCFLAGANSIFYGDTLLTTANPVCEADRQLLADIGAEALEVVTA</sequence>
<proteinExistence type="inferred from homology"/>
<protein>
    <recommendedName>
        <fullName evidence="1">Biotin synthase</fullName>
        <ecNumber evidence="1">2.8.1.6</ecNumber>
    </recommendedName>
</protein>
<comment type="function">
    <text evidence="1">Catalyzes the conversion of dethiobiotin (DTB) to biotin by the insertion of a sulfur atom into dethiobiotin via a radical-based mechanism.</text>
</comment>
<comment type="catalytic activity">
    <reaction evidence="1">
        <text>(4R,5S)-dethiobiotin + (sulfur carrier)-SH + 2 reduced [2Fe-2S]-[ferredoxin] + 2 S-adenosyl-L-methionine = (sulfur carrier)-H + biotin + 2 5'-deoxyadenosine + 2 L-methionine + 2 oxidized [2Fe-2S]-[ferredoxin]</text>
        <dbReference type="Rhea" id="RHEA:22060"/>
        <dbReference type="Rhea" id="RHEA-COMP:10000"/>
        <dbReference type="Rhea" id="RHEA-COMP:10001"/>
        <dbReference type="Rhea" id="RHEA-COMP:14737"/>
        <dbReference type="Rhea" id="RHEA-COMP:14739"/>
        <dbReference type="ChEBI" id="CHEBI:17319"/>
        <dbReference type="ChEBI" id="CHEBI:29917"/>
        <dbReference type="ChEBI" id="CHEBI:33737"/>
        <dbReference type="ChEBI" id="CHEBI:33738"/>
        <dbReference type="ChEBI" id="CHEBI:57586"/>
        <dbReference type="ChEBI" id="CHEBI:57844"/>
        <dbReference type="ChEBI" id="CHEBI:59789"/>
        <dbReference type="ChEBI" id="CHEBI:64428"/>
        <dbReference type="ChEBI" id="CHEBI:149473"/>
        <dbReference type="EC" id="2.8.1.6"/>
    </reaction>
</comment>
<comment type="cofactor">
    <cofactor evidence="1">
        <name>[4Fe-4S] cluster</name>
        <dbReference type="ChEBI" id="CHEBI:49883"/>
    </cofactor>
    <text evidence="1">Binds 1 [4Fe-4S] cluster. The cluster is coordinated with 3 cysteines and an exchangeable S-adenosyl-L-methionine.</text>
</comment>
<comment type="cofactor">
    <cofactor evidence="1">
        <name>[2Fe-2S] cluster</name>
        <dbReference type="ChEBI" id="CHEBI:190135"/>
    </cofactor>
    <text evidence="1">Binds 1 [2Fe-2S] cluster. The cluster is coordinated with 3 cysteines and 1 arginine.</text>
</comment>
<comment type="pathway">
    <text evidence="1">Cofactor biosynthesis; biotin biosynthesis; biotin from 7,8-diaminononanoate: step 2/2.</text>
</comment>
<comment type="subunit">
    <text evidence="1">Homodimer.</text>
</comment>
<comment type="similarity">
    <text evidence="1">Belongs to the radical SAM superfamily. Biotin synthase family.</text>
</comment>
<keyword id="KW-0001">2Fe-2S</keyword>
<keyword id="KW-0004">4Fe-4S</keyword>
<keyword id="KW-0093">Biotin biosynthesis</keyword>
<keyword id="KW-0408">Iron</keyword>
<keyword id="KW-0411">Iron-sulfur</keyword>
<keyword id="KW-0479">Metal-binding</keyword>
<keyword id="KW-1185">Reference proteome</keyword>
<keyword id="KW-0949">S-adenosyl-L-methionine</keyword>
<keyword id="KW-0808">Transferase</keyword>
<accession>Q31R68</accession>
<gene>
    <name evidence="1" type="primary">bioB</name>
    <name type="ordered locus">Synpcc7942_0419</name>
</gene>
<dbReference type="EC" id="2.8.1.6" evidence="1"/>
<dbReference type="EMBL" id="CP000100">
    <property type="protein sequence ID" value="ABB56451.1"/>
    <property type="molecule type" value="Genomic_DNA"/>
</dbReference>
<dbReference type="RefSeq" id="WP_011243409.1">
    <property type="nucleotide sequence ID" value="NZ_JACJTX010000002.1"/>
</dbReference>
<dbReference type="SMR" id="Q31R68"/>
<dbReference type="STRING" id="1140.Synpcc7942_0419"/>
<dbReference type="PaxDb" id="1140-Synpcc7942_0419"/>
<dbReference type="GeneID" id="72429239"/>
<dbReference type="KEGG" id="syf:Synpcc7942_0419"/>
<dbReference type="eggNOG" id="COG0502">
    <property type="taxonomic scope" value="Bacteria"/>
</dbReference>
<dbReference type="HOGENOM" id="CLU_033172_1_2_3"/>
<dbReference type="OrthoDB" id="9786826at2"/>
<dbReference type="BioCyc" id="SYNEL:SYNPCC7942_0419-MONOMER"/>
<dbReference type="UniPathway" id="UPA00078">
    <property type="reaction ID" value="UER00162"/>
</dbReference>
<dbReference type="Proteomes" id="UP000889800">
    <property type="component" value="Chromosome"/>
</dbReference>
<dbReference type="GO" id="GO:0051537">
    <property type="term" value="F:2 iron, 2 sulfur cluster binding"/>
    <property type="evidence" value="ECO:0007669"/>
    <property type="project" value="UniProtKB-KW"/>
</dbReference>
<dbReference type="GO" id="GO:0051539">
    <property type="term" value="F:4 iron, 4 sulfur cluster binding"/>
    <property type="evidence" value="ECO:0007669"/>
    <property type="project" value="UniProtKB-KW"/>
</dbReference>
<dbReference type="GO" id="GO:0004076">
    <property type="term" value="F:biotin synthase activity"/>
    <property type="evidence" value="ECO:0007669"/>
    <property type="project" value="UniProtKB-UniRule"/>
</dbReference>
<dbReference type="GO" id="GO:0005506">
    <property type="term" value="F:iron ion binding"/>
    <property type="evidence" value="ECO:0007669"/>
    <property type="project" value="UniProtKB-UniRule"/>
</dbReference>
<dbReference type="GO" id="GO:0009102">
    <property type="term" value="P:biotin biosynthetic process"/>
    <property type="evidence" value="ECO:0007669"/>
    <property type="project" value="UniProtKB-UniRule"/>
</dbReference>
<dbReference type="CDD" id="cd01335">
    <property type="entry name" value="Radical_SAM"/>
    <property type="match status" value="1"/>
</dbReference>
<dbReference type="Gene3D" id="3.20.20.70">
    <property type="entry name" value="Aldolase class I"/>
    <property type="match status" value="1"/>
</dbReference>
<dbReference type="HAMAP" id="MF_01694">
    <property type="entry name" value="BioB"/>
    <property type="match status" value="1"/>
</dbReference>
<dbReference type="InterPro" id="IPR013785">
    <property type="entry name" value="Aldolase_TIM"/>
</dbReference>
<dbReference type="InterPro" id="IPR010722">
    <property type="entry name" value="BATS_dom"/>
</dbReference>
<dbReference type="InterPro" id="IPR002684">
    <property type="entry name" value="Biotin_synth/BioAB"/>
</dbReference>
<dbReference type="InterPro" id="IPR024177">
    <property type="entry name" value="Biotin_synthase"/>
</dbReference>
<dbReference type="InterPro" id="IPR006638">
    <property type="entry name" value="Elp3/MiaA/NifB-like_rSAM"/>
</dbReference>
<dbReference type="InterPro" id="IPR007197">
    <property type="entry name" value="rSAM"/>
</dbReference>
<dbReference type="NCBIfam" id="TIGR00433">
    <property type="entry name" value="bioB"/>
    <property type="match status" value="1"/>
</dbReference>
<dbReference type="PANTHER" id="PTHR22976">
    <property type="entry name" value="BIOTIN SYNTHASE"/>
    <property type="match status" value="1"/>
</dbReference>
<dbReference type="PANTHER" id="PTHR22976:SF2">
    <property type="entry name" value="BIOTIN SYNTHASE, MITOCHONDRIAL"/>
    <property type="match status" value="1"/>
</dbReference>
<dbReference type="Pfam" id="PF06968">
    <property type="entry name" value="BATS"/>
    <property type="match status" value="1"/>
</dbReference>
<dbReference type="Pfam" id="PF04055">
    <property type="entry name" value="Radical_SAM"/>
    <property type="match status" value="1"/>
</dbReference>
<dbReference type="PIRSF" id="PIRSF001619">
    <property type="entry name" value="Biotin_synth"/>
    <property type="match status" value="1"/>
</dbReference>
<dbReference type="SFLD" id="SFLDF00272">
    <property type="entry name" value="biotin_synthase"/>
    <property type="match status" value="1"/>
</dbReference>
<dbReference type="SFLD" id="SFLDG01278">
    <property type="entry name" value="biotin_synthase_like"/>
    <property type="match status" value="1"/>
</dbReference>
<dbReference type="SMART" id="SM00876">
    <property type="entry name" value="BATS"/>
    <property type="match status" value="1"/>
</dbReference>
<dbReference type="SMART" id="SM00729">
    <property type="entry name" value="Elp3"/>
    <property type="match status" value="1"/>
</dbReference>
<dbReference type="SUPFAM" id="SSF102114">
    <property type="entry name" value="Radical SAM enzymes"/>
    <property type="match status" value="1"/>
</dbReference>
<dbReference type="PROSITE" id="PS51918">
    <property type="entry name" value="RADICAL_SAM"/>
    <property type="match status" value="1"/>
</dbReference>
<evidence type="ECO:0000255" key="1">
    <source>
        <dbReference type="HAMAP-Rule" id="MF_01694"/>
    </source>
</evidence>
<evidence type="ECO:0000255" key="2">
    <source>
        <dbReference type="PROSITE-ProRule" id="PRU01266"/>
    </source>
</evidence>